<evidence type="ECO:0000255" key="1">
    <source>
        <dbReference type="PROSITE-ProRule" id="PRU00303"/>
    </source>
</evidence>
<gene>
    <name type="ordered locus">NMB1124</name>
</gene>
<gene>
    <name type="ordered locus">NMB1162</name>
</gene>
<protein>
    <recommendedName>
        <fullName>Putative lipoprotein NMB1124/NMB1162</fullName>
    </recommendedName>
</protein>
<proteinExistence type="evidence at protein level"/>
<comment type="subcellular location">
    <subcellularLocation>
        <location evidence="1">Cell membrane</location>
        <topology evidence="1">Lipid-anchor</topology>
    </subcellularLocation>
</comment>
<comment type="miscellaneous">
    <text>Present in outer membrane vesicle formulations which are used as vaccines in human.</text>
</comment>
<dbReference type="EMBL" id="AE002098">
    <property type="protein sequence ID" value="AAF41512.1"/>
    <property type="molecule type" value="Genomic_DNA"/>
</dbReference>
<dbReference type="EMBL" id="AE002098">
    <property type="protein sequence ID" value="AAF41547.1"/>
    <property type="molecule type" value="Genomic_DNA"/>
</dbReference>
<dbReference type="RefSeq" id="NP_274153.1">
    <property type="nucleotide sequence ID" value="NC_003112.2"/>
</dbReference>
<dbReference type="RefSeq" id="NP_274189.1">
    <property type="nucleotide sequence ID" value="NC_003112.2"/>
</dbReference>
<dbReference type="RefSeq" id="WP_002217218.1">
    <property type="nucleotide sequence ID" value="NC_003112.2"/>
</dbReference>
<dbReference type="SMR" id="Q7DDE8"/>
<dbReference type="STRING" id="122586.NMB1124"/>
<dbReference type="PaxDb" id="122586-NMB1124"/>
<dbReference type="KEGG" id="nme:NMB1124"/>
<dbReference type="KEGG" id="nme:NMB1162"/>
<dbReference type="PATRIC" id="fig|122586.8.peg.1426"/>
<dbReference type="HOGENOM" id="CLU_097432_1_0_4"/>
<dbReference type="InParanoid" id="Q7DDE8"/>
<dbReference type="OrthoDB" id="1014694at2"/>
<dbReference type="Proteomes" id="UP000000425">
    <property type="component" value="Chromosome"/>
</dbReference>
<dbReference type="GO" id="GO:0005886">
    <property type="term" value="C:plasma membrane"/>
    <property type="evidence" value="ECO:0007669"/>
    <property type="project" value="UniProtKB-SubCell"/>
</dbReference>
<dbReference type="Gene3D" id="3.40.50.10610">
    <property type="entry name" value="ABC-type transport auxiliary lipoprotein component"/>
    <property type="match status" value="1"/>
</dbReference>
<dbReference type="InterPro" id="IPR008517">
    <property type="entry name" value="GNA1162-like"/>
</dbReference>
<dbReference type="Pfam" id="PF05643">
    <property type="entry name" value="GNA1162-like"/>
    <property type="match status" value="1"/>
</dbReference>
<dbReference type="PROSITE" id="PS51257">
    <property type="entry name" value="PROKAR_LIPOPROTEIN"/>
    <property type="match status" value="1"/>
</dbReference>
<feature type="signal peptide" evidence="1">
    <location>
        <begin position="1"/>
        <end position="16"/>
    </location>
</feature>
<feature type="chain" id="PRO_0000320331" description="Putative lipoprotein NMB1124/NMB1162">
    <location>
        <begin position="17"/>
        <end position="215"/>
    </location>
</feature>
<feature type="lipid moiety-binding region" description="N-palmitoyl cysteine" evidence="1">
    <location>
        <position position="17"/>
    </location>
</feature>
<feature type="lipid moiety-binding region" description="S-diacylglycerol cysteine" evidence="1">
    <location>
        <position position="17"/>
    </location>
</feature>
<keyword id="KW-1003">Cell membrane</keyword>
<keyword id="KW-0449">Lipoprotein</keyword>
<keyword id="KW-0472">Membrane</keyword>
<keyword id="KW-0564">Palmitate</keyword>
<keyword id="KW-1185">Reference proteome</keyword>
<keyword id="KW-0732">Signal</keyword>
<accession>Q7DDE8</accession>
<organism>
    <name type="scientific">Neisseria meningitidis serogroup B (strain ATCC BAA-335 / MC58)</name>
    <dbReference type="NCBI Taxonomy" id="122586"/>
    <lineage>
        <taxon>Bacteria</taxon>
        <taxon>Pseudomonadati</taxon>
        <taxon>Pseudomonadota</taxon>
        <taxon>Betaproteobacteria</taxon>
        <taxon>Neisseriales</taxon>
        <taxon>Neisseriaceae</taxon>
        <taxon>Neisseria</taxon>
    </lineage>
</organism>
<sequence>MKPLILGLAAVLALSACQVQKAPDFDYTSFKESKPASILVVPPLNESPDVNGTWGVLASTAAPLSEAGYYVFPAAVVEETFKQNGLTNAADIHAVRPEKLHQIFGNDAVLYITVTEYGTSYQILDSVTTVSAKARLVDSRNGKELWSGSASIREGSNNSNSGLLGALVSAVVNQIANSLTDRGYQVSKTAAYNLLSPYSHNGILKGPRFVEEQPK</sequence>
<name>Y1124_NEIMB</name>
<reference key="1">
    <citation type="journal article" date="2000" name="Science">
        <title>Complete genome sequence of Neisseria meningitidis serogroup B strain MC58.</title>
        <authorList>
            <person name="Tettelin H."/>
            <person name="Saunders N.J."/>
            <person name="Heidelberg J.F."/>
            <person name="Jeffries A.C."/>
            <person name="Nelson K.E."/>
            <person name="Eisen J.A."/>
            <person name="Ketchum K.A."/>
            <person name="Hood D.W."/>
            <person name="Peden J.F."/>
            <person name="Dodson R.J."/>
            <person name="Nelson W.C."/>
            <person name="Gwinn M.L."/>
            <person name="DeBoy R.T."/>
            <person name="Peterson J.D."/>
            <person name="Hickey E.K."/>
            <person name="Haft D.H."/>
            <person name="Salzberg S.L."/>
            <person name="White O."/>
            <person name="Fleischmann R.D."/>
            <person name="Dougherty B.A."/>
            <person name="Mason T.M."/>
            <person name="Ciecko A."/>
            <person name="Parksey D.S."/>
            <person name="Blair E."/>
            <person name="Cittone H."/>
            <person name="Clark E.B."/>
            <person name="Cotton M.D."/>
            <person name="Utterback T.R."/>
            <person name="Khouri H.M."/>
            <person name="Qin H."/>
            <person name="Vamathevan J.J."/>
            <person name="Gill J."/>
            <person name="Scarlato V."/>
            <person name="Masignani V."/>
            <person name="Pizza M."/>
            <person name="Grandi G."/>
            <person name="Sun L."/>
            <person name="Smith H.O."/>
            <person name="Fraser C.M."/>
            <person name="Moxon E.R."/>
            <person name="Rappuoli R."/>
            <person name="Venter J.C."/>
        </authorList>
    </citation>
    <scope>NUCLEOTIDE SEQUENCE [LARGE SCALE GENOMIC DNA]</scope>
    <source>
        <strain>ATCC BAA-335 / MC58</strain>
    </source>
</reference>
<reference key="2">
    <citation type="journal article" date="2006" name="Proteomics">
        <title>Proteomic analysis of a meningococcal outer membrane vesicle vaccine prepared from the group B strain NZ98/254.</title>
        <authorList>
            <person name="Vipond C."/>
            <person name="Suker J."/>
            <person name="Jones C."/>
            <person name="Tang C."/>
            <person name="Feavers I.M."/>
            <person name="Wheeler J.X."/>
        </authorList>
    </citation>
    <scope>IDENTIFICATION BY MASS SPECTROMETRY [LARGE SCALE ANALYSIS]</scope>
    <source>
        <strain>NZ98/254 / Serogroup B</strain>
    </source>
</reference>